<keyword id="KW-0002">3D-structure</keyword>
<keyword id="KW-0013">ADP-ribosylation</keyword>
<keyword id="KW-0963">Cytoplasm</keyword>
<keyword id="KW-0217">Developmental protein</keyword>
<keyword id="KW-0597">Phosphoprotein</keyword>
<keyword id="KW-1267">Proteomics identification</keyword>
<keyword id="KW-1185">Reference proteome</keyword>
<keyword id="KW-0832">Ubl conjugation</keyword>
<keyword id="KW-0879">Wnt signaling pathway</keyword>
<evidence type="ECO:0000250" key="1"/>
<evidence type="ECO:0000250" key="2">
    <source>
        <dbReference type="UniProtKB" id="O15169"/>
    </source>
</evidence>
<evidence type="ECO:0000250" key="3">
    <source>
        <dbReference type="UniProtKB" id="O88566"/>
    </source>
</evidence>
<evidence type="ECO:0000255" key="4">
    <source>
        <dbReference type="PROSITE-ProRule" id="PRU00069"/>
    </source>
</evidence>
<evidence type="ECO:0000255" key="5">
    <source>
        <dbReference type="PROSITE-ProRule" id="PRU00171"/>
    </source>
</evidence>
<evidence type="ECO:0000256" key="6">
    <source>
        <dbReference type="SAM" id="MobiDB-lite"/>
    </source>
</evidence>
<evidence type="ECO:0000269" key="7">
    <source>
    </source>
</evidence>
<evidence type="ECO:0000269" key="8">
    <source>
    </source>
</evidence>
<evidence type="ECO:0000269" key="9">
    <source>
    </source>
</evidence>
<evidence type="ECO:0000269" key="10">
    <source>
    </source>
</evidence>
<evidence type="ECO:0000269" key="11">
    <source>
    </source>
</evidence>
<evidence type="ECO:0000269" key="12">
    <source>
    </source>
</evidence>
<evidence type="ECO:0000269" key="13">
    <source>
    </source>
</evidence>
<evidence type="ECO:0000269" key="14">
    <source>
    </source>
</evidence>
<evidence type="ECO:0000269" key="15">
    <source>
    </source>
</evidence>
<evidence type="ECO:0000269" key="16">
    <source>
    </source>
</evidence>
<evidence type="ECO:0000305" key="17"/>
<sequence length="843" mass="93568">MSSAMLVTCLPDPSSSFREDAPRPPVPGEEGETPPCQPGVGKGQVTKPMPVSSNTRRNEDGLGEPEGRASPDSPLTRWTKSLHSLLGDQDGAYLFRTFLEREKCVDTLDFWFACNGFRQMNLKDTKTLRVAKAIYKRYIENNSIVSKQLKPATKTYIRDGIKKQQIDSIMFDQAQTEIQSVMEENAYQMFLTSDIYLEYVRSGGENTAYMSNGGLGSLKVVCGYLPTLNEEEEWTCADFKCKLSPTVVGLSSKTLRATASVRSTETVDSGYRSFKRSDPVNPYHIGSGYVFAPATSANDSEISSDALTDDSMSMTDSSVDGIPPYRVGSKKQLQREMHRSVKANGQVSLPHFPRTHRLPKEMTPVEPATFAAELISRLEKLKLELESRHSLEERLQQIREDEEREGSELTLNSREGAPTQHPLSLLPSGSYEEDPQTILDDHLSRVLKTPGCQSPGVGRYSPRSRSPDHHHHHHSQYHSLLPPGGKLPPAAASPGACPLLGGKGFVTKQTTKHVHHHYIHHHAVPKTKEEIEAEATQRVHCFCPGGSEYYCYSKCKSHSKAPETMPSEQFGGSRGSTLPKRNGKGTEPGLALPAREGGAPGGAGALQLPREEGDRSQDVWQWMLESERQSKPKPHSAQSTKKAYPLESARSSPGERASRHHLWGGNSGHPRTTPRAHLFTQDPAMPPLTPPNTLAQLEEACRRLAEVSKPPKQRCCVASQQRDRNHSATVQTGATPFSNPSLAPEDHKEPKKLAGVHALQASELVVTYFFCGEEIPYRRMLKAQSLTLGHFKEQLSKKGNYRYYFKKASDEFACGAVFEEIWEDETVLPMYEGRILGKVERID</sequence>
<accession>Q9Y2T1</accession>
<accession>Q3MJ88</accession>
<accession>Q9H3M6</accession>
<accession>Q9UH84</accession>
<dbReference type="EMBL" id="AF078165">
    <property type="protein sequence ID" value="AAD20976.1"/>
    <property type="molecule type" value="mRNA"/>
</dbReference>
<dbReference type="EMBL" id="AF205888">
    <property type="protein sequence ID" value="AAF22799.1"/>
    <property type="molecule type" value="mRNA"/>
</dbReference>
<dbReference type="EMBL" id="AC115994">
    <property type="status" value="NOT_ANNOTATED_CDS"/>
    <property type="molecule type" value="Genomic_DNA"/>
</dbReference>
<dbReference type="EMBL" id="BC101533">
    <property type="protein sequence ID" value="AAI01534.1"/>
    <property type="molecule type" value="mRNA"/>
</dbReference>
<dbReference type="EMBL" id="AB052751">
    <property type="protein sequence ID" value="BAB19762.1"/>
    <property type="molecule type" value="mRNA"/>
</dbReference>
<dbReference type="CCDS" id="CCDS11662.1"/>
<dbReference type="RefSeq" id="NP_004646.3">
    <property type="nucleotide sequence ID" value="NM_004655.4"/>
</dbReference>
<dbReference type="RefSeq" id="XP_011523621.1">
    <property type="nucleotide sequence ID" value="XM_011525319.3"/>
</dbReference>
<dbReference type="RefSeq" id="XP_011523622.1">
    <property type="nucleotide sequence ID" value="XM_011525320.2"/>
</dbReference>
<dbReference type="RefSeq" id="XP_011523623.1">
    <property type="nucleotide sequence ID" value="XM_011525321.3"/>
</dbReference>
<dbReference type="RefSeq" id="XP_016880681.1">
    <property type="nucleotide sequence ID" value="XM_017025192.2"/>
</dbReference>
<dbReference type="RefSeq" id="XP_047292826.1">
    <property type="nucleotide sequence ID" value="XM_047436870.1"/>
</dbReference>
<dbReference type="PDB" id="8HEO">
    <property type="method" value="X-ray"/>
    <property type="resolution" value="2.53 A"/>
    <property type="chains" value="G=356-376"/>
</dbReference>
<dbReference type="PDBsum" id="8HEO"/>
<dbReference type="SMR" id="Q9Y2T1"/>
<dbReference type="BioGRID" id="113910">
    <property type="interactions" value="71"/>
</dbReference>
<dbReference type="ComplexPortal" id="CPX-439">
    <property type="entry name" value="Beta-catenin destruction core complex, APC-AXIN2-GSK3B variant"/>
</dbReference>
<dbReference type="ComplexPortal" id="CPX-440">
    <property type="entry name" value="Beta-catenin destruction core complex, APC2-AXIN2-GSK3B variant"/>
</dbReference>
<dbReference type="ComplexPortal" id="CPX-441">
    <property type="entry name" value="Beta-catenin destruction core complex, APC-AXIN2-GSK3A variant"/>
</dbReference>
<dbReference type="ComplexPortal" id="CPX-443">
    <property type="entry name" value="Beta-catenin destruction core complex, APC2-AXIN2-GSK3A variant"/>
</dbReference>
<dbReference type="DIP" id="DIP-59293N"/>
<dbReference type="FunCoup" id="Q9Y2T1">
    <property type="interactions" value="2073"/>
</dbReference>
<dbReference type="IntAct" id="Q9Y2T1">
    <property type="interactions" value="61"/>
</dbReference>
<dbReference type="MINT" id="Q9Y2T1"/>
<dbReference type="STRING" id="9606.ENSP00000302625"/>
<dbReference type="BindingDB" id="Q9Y2T1"/>
<dbReference type="ChEMBL" id="CHEMBL1255167"/>
<dbReference type="GuidetoPHARMACOLOGY" id="3237"/>
<dbReference type="GlyGen" id="Q9Y2T1">
    <property type="glycosylation" value="1 site, 1 O-linked glycan (1 site)"/>
</dbReference>
<dbReference type="iPTMnet" id="Q9Y2T1"/>
<dbReference type="PhosphoSitePlus" id="Q9Y2T1"/>
<dbReference type="BioMuta" id="AXIN2"/>
<dbReference type="DMDM" id="12643949"/>
<dbReference type="jPOST" id="Q9Y2T1"/>
<dbReference type="MassIVE" id="Q9Y2T1"/>
<dbReference type="PaxDb" id="9606-ENSP00000302625"/>
<dbReference type="PeptideAtlas" id="Q9Y2T1"/>
<dbReference type="ProteomicsDB" id="85888"/>
<dbReference type="Antibodypedia" id="31648">
    <property type="antibodies" value="398 antibodies from 40 providers"/>
</dbReference>
<dbReference type="DNASU" id="8313"/>
<dbReference type="Ensembl" id="ENST00000307078.10">
    <property type="protein sequence ID" value="ENSP00000302625.5"/>
    <property type="gene ID" value="ENSG00000168646.14"/>
</dbReference>
<dbReference type="GeneID" id="8313"/>
<dbReference type="KEGG" id="hsa:8313"/>
<dbReference type="MANE-Select" id="ENST00000307078.10">
    <property type="protein sequence ID" value="ENSP00000302625.5"/>
    <property type="RefSeq nucleotide sequence ID" value="NM_004655.4"/>
    <property type="RefSeq protein sequence ID" value="NP_004646.3"/>
</dbReference>
<dbReference type="UCSC" id="uc002jfi.4">
    <property type="organism name" value="human"/>
</dbReference>
<dbReference type="AGR" id="HGNC:904"/>
<dbReference type="CTD" id="8313"/>
<dbReference type="DisGeNET" id="8313"/>
<dbReference type="GeneCards" id="AXIN2"/>
<dbReference type="HGNC" id="HGNC:904">
    <property type="gene designation" value="AXIN2"/>
</dbReference>
<dbReference type="HPA" id="ENSG00000168646">
    <property type="expression patterns" value="Low tissue specificity"/>
</dbReference>
<dbReference type="MalaCards" id="AXIN2"/>
<dbReference type="MIM" id="114500">
    <property type="type" value="phenotype"/>
</dbReference>
<dbReference type="MIM" id="604025">
    <property type="type" value="gene"/>
</dbReference>
<dbReference type="MIM" id="608615">
    <property type="type" value="phenotype"/>
</dbReference>
<dbReference type="neXtProt" id="NX_Q9Y2T1"/>
<dbReference type="OpenTargets" id="ENSG00000168646"/>
<dbReference type="Orphanet" id="401911">
    <property type="disease" value="AXIN2-related attenuated familial adenomatous polyposis"/>
</dbReference>
<dbReference type="PharmGKB" id="PA25196"/>
<dbReference type="VEuPathDB" id="HostDB:ENSG00000168646"/>
<dbReference type="eggNOG" id="KOG3589">
    <property type="taxonomic scope" value="Eukaryota"/>
</dbReference>
<dbReference type="GeneTree" id="ENSGT00940000157338"/>
<dbReference type="InParanoid" id="Q9Y2T1"/>
<dbReference type="OMA" id="TEPCLAL"/>
<dbReference type="OrthoDB" id="10007451at2759"/>
<dbReference type="PAN-GO" id="Q9Y2T1">
    <property type="GO annotations" value="13 GO annotations based on evolutionary models"/>
</dbReference>
<dbReference type="PhylomeDB" id="Q9Y2T1"/>
<dbReference type="TreeFam" id="TF315454"/>
<dbReference type="PathwayCommons" id="Q9Y2T1"/>
<dbReference type="Reactome" id="R-HSA-201681">
    <property type="pathway name" value="TCF dependent signaling in response to WNT"/>
</dbReference>
<dbReference type="Reactome" id="R-HSA-4411364">
    <property type="pathway name" value="Binding of TCF/LEF:CTNNB1 to target gene promoters"/>
</dbReference>
<dbReference type="Reactome" id="R-HSA-4641257">
    <property type="pathway name" value="Degradation of AXIN"/>
</dbReference>
<dbReference type="Reactome" id="R-HSA-5689880">
    <property type="pathway name" value="Ub-specific processing proteases"/>
</dbReference>
<dbReference type="SignaLink" id="Q9Y2T1"/>
<dbReference type="SIGNOR" id="Q9Y2T1"/>
<dbReference type="BioGRID-ORCS" id="8313">
    <property type="hits" value="18 hits in 1169 CRISPR screens"/>
</dbReference>
<dbReference type="CD-CODE" id="8C2F96ED">
    <property type="entry name" value="Centrosome"/>
</dbReference>
<dbReference type="ChiTaRS" id="AXIN2">
    <property type="organism name" value="human"/>
</dbReference>
<dbReference type="GeneWiki" id="AXIN2"/>
<dbReference type="GenomeRNAi" id="8313"/>
<dbReference type="Pharos" id="Q9Y2T1">
    <property type="development level" value="Tchem"/>
</dbReference>
<dbReference type="PRO" id="PR:Q9Y2T1"/>
<dbReference type="Proteomes" id="UP000005640">
    <property type="component" value="Chromosome 17"/>
</dbReference>
<dbReference type="RNAct" id="Q9Y2T1">
    <property type="molecule type" value="protein"/>
</dbReference>
<dbReference type="Bgee" id="ENSG00000168646">
    <property type="expression patterns" value="Expressed in oviduct epithelium and 160 other cell types or tissues"/>
</dbReference>
<dbReference type="ExpressionAtlas" id="Q9Y2T1">
    <property type="expression patterns" value="baseline and differential"/>
</dbReference>
<dbReference type="GO" id="GO:0030877">
    <property type="term" value="C:beta-catenin destruction complex"/>
    <property type="evidence" value="ECO:0000318"/>
    <property type="project" value="GO_Central"/>
</dbReference>
<dbReference type="GO" id="GO:0005813">
    <property type="term" value="C:centrosome"/>
    <property type="evidence" value="ECO:0000314"/>
    <property type="project" value="BHF-UCL"/>
</dbReference>
<dbReference type="GO" id="GO:0005737">
    <property type="term" value="C:cytoplasm"/>
    <property type="evidence" value="ECO:0000314"/>
    <property type="project" value="UniProtKB"/>
</dbReference>
<dbReference type="GO" id="GO:0005829">
    <property type="term" value="C:cytosol"/>
    <property type="evidence" value="ECO:0000304"/>
    <property type="project" value="Reactome"/>
</dbReference>
<dbReference type="GO" id="GO:0005634">
    <property type="term" value="C:nucleus"/>
    <property type="evidence" value="ECO:0000314"/>
    <property type="project" value="UniProtKB"/>
</dbReference>
<dbReference type="GO" id="GO:0005886">
    <property type="term" value="C:plasma membrane"/>
    <property type="evidence" value="ECO:0000318"/>
    <property type="project" value="GO_Central"/>
</dbReference>
<dbReference type="GO" id="GO:0008013">
    <property type="term" value="F:beta-catenin binding"/>
    <property type="evidence" value="ECO:0000318"/>
    <property type="project" value="GO_Central"/>
</dbReference>
<dbReference type="GO" id="GO:0019899">
    <property type="term" value="F:enzyme binding"/>
    <property type="evidence" value="ECO:0000353"/>
    <property type="project" value="UniProtKB"/>
</dbReference>
<dbReference type="GO" id="GO:0070411">
    <property type="term" value="F:I-SMAD binding"/>
    <property type="evidence" value="ECO:0000318"/>
    <property type="project" value="GO_Central"/>
</dbReference>
<dbReference type="GO" id="GO:0060090">
    <property type="term" value="F:molecular adaptor activity"/>
    <property type="evidence" value="ECO:0000318"/>
    <property type="project" value="GO_Central"/>
</dbReference>
<dbReference type="GO" id="GO:0019901">
    <property type="term" value="F:protein kinase binding"/>
    <property type="evidence" value="ECO:0000318"/>
    <property type="project" value="GO_Central"/>
</dbReference>
<dbReference type="GO" id="GO:0031625">
    <property type="term" value="F:ubiquitin protein ligase binding"/>
    <property type="evidence" value="ECO:0000353"/>
    <property type="project" value="UniProtKB"/>
</dbReference>
<dbReference type="GO" id="GO:0003180">
    <property type="term" value="P:aortic valve morphogenesis"/>
    <property type="evidence" value="ECO:0000250"/>
    <property type="project" value="BHF-UCL"/>
</dbReference>
<dbReference type="GO" id="GO:0030282">
    <property type="term" value="P:bone mineralization"/>
    <property type="evidence" value="ECO:0007669"/>
    <property type="project" value="Ensembl"/>
</dbReference>
<dbReference type="GO" id="GO:0060070">
    <property type="term" value="P:canonical Wnt signaling pathway"/>
    <property type="evidence" value="ECO:0000315"/>
    <property type="project" value="BHF-UCL"/>
</dbReference>
<dbReference type="GO" id="GO:0048468">
    <property type="term" value="P:cell development"/>
    <property type="evidence" value="ECO:0000318"/>
    <property type="project" value="GO_Central"/>
</dbReference>
<dbReference type="GO" id="GO:0071549">
    <property type="term" value="P:cellular response to dexamethasone stimulus"/>
    <property type="evidence" value="ECO:0007669"/>
    <property type="project" value="Ensembl"/>
</dbReference>
<dbReference type="GO" id="GO:0003413">
    <property type="term" value="P:chondrocyte differentiation involved in endochondral bone morphogenesis"/>
    <property type="evidence" value="ECO:0007669"/>
    <property type="project" value="Ensembl"/>
</dbReference>
<dbReference type="GO" id="GO:0009950">
    <property type="term" value="P:dorsal/ventral axis specification"/>
    <property type="evidence" value="ECO:0007669"/>
    <property type="project" value="Ensembl"/>
</dbReference>
<dbReference type="GO" id="GO:0001957">
    <property type="term" value="P:intramembranous ossification"/>
    <property type="evidence" value="ECO:0007669"/>
    <property type="project" value="Ensembl"/>
</dbReference>
<dbReference type="GO" id="GO:0043570">
    <property type="term" value="P:maintenance of DNA repeat elements"/>
    <property type="evidence" value="ECO:0000315"/>
    <property type="project" value="BHF-UCL"/>
</dbReference>
<dbReference type="GO" id="GO:0003183">
    <property type="term" value="P:mitral valve morphogenesis"/>
    <property type="evidence" value="ECO:0000250"/>
    <property type="project" value="BHF-UCL"/>
</dbReference>
<dbReference type="GO" id="GO:0048255">
    <property type="term" value="P:mRNA stabilization"/>
    <property type="evidence" value="ECO:0000315"/>
    <property type="project" value="BHF-UCL"/>
</dbReference>
<dbReference type="GO" id="GO:0090090">
    <property type="term" value="P:negative regulation of canonical Wnt signaling pathway"/>
    <property type="evidence" value="ECO:0000314"/>
    <property type="project" value="BHF-UCL"/>
</dbReference>
<dbReference type="GO" id="GO:0045668">
    <property type="term" value="P:negative regulation of osteoblast differentiation"/>
    <property type="evidence" value="ECO:0007669"/>
    <property type="project" value="Ensembl"/>
</dbReference>
<dbReference type="GO" id="GO:0033689">
    <property type="term" value="P:negative regulation of osteoblast proliferation"/>
    <property type="evidence" value="ECO:0007669"/>
    <property type="project" value="Ensembl"/>
</dbReference>
<dbReference type="GO" id="GO:0042476">
    <property type="term" value="P:odontogenesis"/>
    <property type="evidence" value="ECO:0000315"/>
    <property type="project" value="BHF-UCL"/>
</dbReference>
<dbReference type="GO" id="GO:0001649">
    <property type="term" value="P:osteoblast differentiation"/>
    <property type="evidence" value="ECO:0007669"/>
    <property type="project" value="Ensembl"/>
</dbReference>
<dbReference type="GO" id="GO:0033687">
    <property type="term" value="P:osteoblast proliferation"/>
    <property type="evidence" value="ECO:0007669"/>
    <property type="project" value="Ensembl"/>
</dbReference>
<dbReference type="GO" id="GO:0010718">
    <property type="term" value="P:positive regulation of epithelial to mesenchymal transition"/>
    <property type="evidence" value="ECO:0000315"/>
    <property type="project" value="BHF-UCL"/>
</dbReference>
<dbReference type="GO" id="GO:0045600">
    <property type="term" value="P:positive regulation of fat cell differentiation"/>
    <property type="evidence" value="ECO:0007669"/>
    <property type="project" value="Ensembl"/>
</dbReference>
<dbReference type="GO" id="GO:0032436">
    <property type="term" value="P:positive regulation of proteasomal ubiquitin-dependent protein catabolic process"/>
    <property type="evidence" value="ECO:0000318"/>
    <property type="project" value="GO_Central"/>
</dbReference>
<dbReference type="GO" id="GO:0043161">
    <property type="term" value="P:proteasome-mediated ubiquitin-dependent protein catabolic process"/>
    <property type="evidence" value="ECO:0000303"/>
    <property type="project" value="ComplexPortal"/>
</dbReference>
<dbReference type="GO" id="GO:0008104">
    <property type="term" value="P:protein localization"/>
    <property type="evidence" value="ECO:0000314"/>
    <property type="project" value="BHF-UCL"/>
</dbReference>
<dbReference type="GO" id="GO:0070602">
    <property type="term" value="P:regulation of centromeric sister chromatid cohesion"/>
    <property type="evidence" value="ECO:0000315"/>
    <property type="project" value="BHF-UCL"/>
</dbReference>
<dbReference type="GO" id="GO:0061181">
    <property type="term" value="P:regulation of chondrocyte development"/>
    <property type="evidence" value="ECO:0007669"/>
    <property type="project" value="Ensembl"/>
</dbReference>
<dbReference type="GO" id="GO:1903053">
    <property type="term" value="P:regulation of extracellular matrix organization"/>
    <property type="evidence" value="ECO:0000250"/>
    <property type="project" value="BHF-UCL"/>
</dbReference>
<dbReference type="GO" id="GO:0032423">
    <property type="term" value="P:regulation of mismatch repair"/>
    <property type="evidence" value="ECO:0000315"/>
    <property type="project" value="BHF-UCL"/>
</dbReference>
<dbReference type="GO" id="GO:0003139">
    <property type="term" value="P:secondary heart field specification"/>
    <property type="evidence" value="ECO:0007669"/>
    <property type="project" value="Ensembl"/>
</dbReference>
<dbReference type="GO" id="GO:0001756">
    <property type="term" value="P:somitogenesis"/>
    <property type="evidence" value="ECO:0007669"/>
    <property type="project" value="Ensembl"/>
</dbReference>
<dbReference type="GO" id="GO:0072089">
    <property type="term" value="P:stem cell proliferation"/>
    <property type="evidence" value="ECO:0007669"/>
    <property type="project" value="Ensembl"/>
</dbReference>
<dbReference type="CDD" id="cd11582">
    <property type="entry name" value="Axin_TNKS_binding"/>
    <property type="match status" value="1"/>
</dbReference>
<dbReference type="CDD" id="cd08707">
    <property type="entry name" value="RGS_Axin"/>
    <property type="match status" value="1"/>
</dbReference>
<dbReference type="FunFam" id="1.10.167.10:FF:000003">
    <property type="entry name" value="Axin 1"/>
    <property type="match status" value="1"/>
</dbReference>
<dbReference type="FunFam" id="1.10.196.10:FF:000002">
    <property type="entry name" value="Axin 1"/>
    <property type="match status" value="1"/>
</dbReference>
<dbReference type="FunFam" id="2.40.240.130:FF:000002">
    <property type="entry name" value="Axin 1"/>
    <property type="match status" value="1"/>
</dbReference>
<dbReference type="Gene3D" id="1.10.196.10">
    <property type="match status" value="1"/>
</dbReference>
<dbReference type="Gene3D" id="2.40.240.130">
    <property type="match status" value="1"/>
</dbReference>
<dbReference type="Gene3D" id="1.10.167.10">
    <property type="entry name" value="Regulator of G-protein Signalling 4, domain 2"/>
    <property type="match status" value="1"/>
</dbReference>
<dbReference type="InterPro" id="IPR043581">
    <property type="entry name" value="Axin-like"/>
</dbReference>
<dbReference type="InterPro" id="IPR014936">
    <property type="entry name" value="Axin_b-cat-bd"/>
</dbReference>
<dbReference type="InterPro" id="IPR032101">
    <property type="entry name" value="Axin_TNKS-bd"/>
</dbReference>
<dbReference type="InterPro" id="IPR001158">
    <property type="entry name" value="DIX"/>
</dbReference>
<dbReference type="InterPro" id="IPR038207">
    <property type="entry name" value="DIX_dom_sf"/>
</dbReference>
<dbReference type="InterPro" id="IPR016137">
    <property type="entry name" value="RGS"/>
</dbReference>
<dbReference type="InterPro" id="IPR036305">
    <property type="entry name" value="RGS_sf"/>
</dbReference>
<dbReference type="InterPro" id="IPR024066">
    <property type="entry name" value="RGS_subdom1/3"/>
</dbReference>
<dbReference type="InterPro" id="IPR044926">
    <property type="entry name" value="RGS_subdomain_2"/>
</dbReference>
<dbReference type="InterPro" id="IPR029071">
    <property type="entry name" value="Ubiquitin-like_domsf"/>
</dbReference>
<dbReference type="PANTHER" id="PTHR46102">
    <property type="entry name" value="AXIN"/>
    <property type="match status" value="1"/>
</dbReference>
<dbReference type="PANTHER" id="PTHR46102:SF1">
    <property type="entry name" value="AXIN-2"/>
    <property type="match status" value="1"/>
</dbReference>
<dbReference type="Pfam" id="PF16646">
    <property type="entry name" value="AXIN1_TNKS_BD"/>
    <property type="match status" value="1"/>
</dbReference>
<dbReference type="Pfam" id="PF08833">
    <property type="entry name" value="Axin_b-cat_bind"/>
    <property type="match status" value="1"/>
</dbReference>
<dbReference type="Pfam" id="PF00778">
    <property type="entry name" value="DIX"/>
    <property type="match status" value="1"/>
</dbReference>
<dbReference type="Pfam" id="PF00615">
    <property type="entry name" value="RGS"/>
    <property type="match status" value="1"/>
</dbReference>
<dbReference type="PRINTS" id="PR01301">
    <property type="entry name" value="RGSPROTEIN"/>
</dbReference>
<dbReference type="SMART" id="SM00021">
    <property type="entry name" value="DAX"/>
    <property type="match status" value="1"/>
</dbReference>
<dbReference type="SMART" id="SM00315">
    <property type="entry name" value="RGS"/>
    <property type="match status" value="1"/>
</dbReference>
<dbReference type="SUPFAM" id="SSF48097">
    <property type="entry name" value="Regulator of G-protein signaling, RGS"/>
    <property type="match status" value="1"/>
</dbReference>
<dbReference type="SUPFAM" id="SSF54236">
    <property type="entry name" value="Ubiquitin-like"/>
    <property type="match status" value="1"/>
</dbReference>
<dbReference type="PROSITE" id="PS50841">
    <property type="entry name" value="DIX"/>
    <property type="match status" value="1"/>
</dbReference>
<dbReference type="PROSITE" id="PS50132">
    <property type="entry name" value="RGS"/>
    <property type="match status" value="1"/>
</dbReference>
<protein>
    <recommendedName>
        <fullName>Axin-2</fullName>
    </recommendedName>
    <alternativeName>
        <fullName>Axin-like protein</fullName>
        <shortName>Axil</shortName>
    </alternativeName>
    <alternativeName>
        <fullName>Axis inhibition protein 2</fullName>
    </alternativeName>
    <alternativeName>
        <fullName>Conductin</fullName>
    </alternativeName>
</protein>
<gene>
    <name type="primary">AXIN2</name>
</gene>
<comment type="function">
    <text evidence="2">Inhibitor of the Wnt signaling pathway. Down-regulates beta-catenin. Probably facilitate the phosphorylation of beta-catenin and APC by GSK3B.</text>
</comment>
<comment type="subunit">
    <text evidence="3 11 13 15 16">Interacts with glycogen synthase kinase-3 beta (GSK3B) and beta-catenin. The interaction between axin and beta-catenin occurs via the armadillo repeats contained in beta-catenin (By similarity). Interacts with SMAD7 and RNF111. Interacts with ANKRD6. Interacts with SIAH1 (PubMed:28546513). Interacts with SIAH2 (PubMed:28546513).</text>
</comment>
<comment type="interaction">
    <interactant intactId="EBI-4400025">
        <id>Q9Y2T1</id>
    </interactant>
    <interactant intactId="EBI-8869590">
        <id>Q8N944</id>
        <label>AMER3</label>
    </interactant>
    <organismsDiffer>false</organismsDiffer>
    <experiments>2</experiments>
</comment>
<comment type="interaction">
    <interactant intactId="EBI-4400025">
        <id>Q9Y2T1</id>
    </interactant>
    <interactant intactId="EBI-17286414">
        <id>A2BDD9</id>
        <label>AMOT</label>
    </interactant>
    <organismsDiffer>false</organismsDiffer>
    <experiments>3</experiments>
</comment>
<comment type="interaction">
    <interactant intactId="EBI-4400025">
        <id>Q9Y2T1</id>
    </interactant>
    <interactant intactId="EBI-541426">
        <id>Q9BXS5</id>
        <label>AP1M1</label>
    </interactant>
    <organismsDiffer>false</organismsDiffer>
    <experiments>3</experiments>
</comment>
<comment type="interaction">
    <interactant intactId="EBI-4400025">
        <id>Q9Y2T1</id>
    </interactant>
    <interactant intactId="EBI-473181">
        <id>Q99728</id>
        <label>BARD1</label>
    </interactant>
    <organismsDiffer>false</organismsDiffer>
    <experiments>3</experiments>
</comment>
<comment type="interaction">
    <interactant intactId="EBI-4400025">
        <id>Q9Y2T1</id>
    </interactant>
    <interactant intactId="EBI-307461">
        <id>Q9Y297</id>
        <label>BTRC</label>
    </interactant>
    <organismsDiffer>false</organismsDiffer>
    <experiments>3</experiments>
</comment>
<comment type="interaction">
    <interactant intactId="EBI-4400025">
        <id>Q9Y2T1</id>
    </interactant>
    <interactant intactId="EBI-358049">
        <id>Q13895</id>
        <label>BYSL</label>
    </interactant>
    <organismsDiffer>false</organismsDiffer>
    <experiments>3</experiments>
</comment>
<comment type="interaction">
    <interactant intactId="EBI-4400025">
        <id>Q9Y2T1</id>
    </interactant>
    <interactant intactId="EBI-11603468">
        <id>Q2NKX9</id>
        <label>C2orf68</label>
    </interactant>
    <organismsDiffer>false</organismsDiffer>
    <experiments>3</experiments>
</comment>
<comment type="interaction">
    <interactant intactId="EBI-4400025">
        <id>Q9Y2T1</id>
    </interactant>
    <interactant intactId="EBI-1765641">
        <id>Q9Y6W3</id>
        <label>CAPN7</label>
    </interactant>
    <organismsDiffer>false</organismsDiffer>
    <experiments>3</experiments>
</comment>
<comment type="interaction">
    <interactant intactId="EBI-4400025">
        <id>Q9Y2T1</id>
    </interactant>
    <interactant intactId="EBI-12095166">
        <id>Q8NEF3-2</id>
        <label>CCDC112</label>
    </interactant>
    <organismsDiffer>false</organismsDiffer>
    <experiments>3</experiments>
</comment>
<comment type="interaction">
    <interactant intactId="EBI-4400025">
        <id>Q9Y2T1</id>
    </interactant>
    <interactant intactId="EBI-741528">
        <id>Q9UKJ5</id>
        <label>CHIC2</label>
    </interactant>
    <organismsDiffer>false</organismsDiffer>
    <experiments>3</experiments>
</comment>
<comment type="interaction">
    <interactant intactId="EBI-4400025">
        <id>Q9Y2T1</id>
    </interactant>
    <interactant intactId="EBI-12265122">
        <id>O75638-2</id>
        <label>CTAG2</label>
    </interactant>
    <organismsDiffer>false</organismsDiffer>
    <experiments>3</experiments>
</comment>
<comment type="interaction">
    <interactant intactId="EBI-4400025">
        <id>Q9Y2T1</id>
    </interactant>
    <interactant intactId="EBI-491549">
        <id>P35222</id>
        <label>CTNNB1</label>
    </interactant>
    <organismsDiffer>false</organismsDiffer>
    <experiments>2</experiments>
</comment>
<comment type="interaction">
    <interactant intactId="EBI-4400025">
        <id>Q9Y2T1</id>
    </interactant>
    <interactant intactId="EBI-5453285">
        <id>Q2TBE0</id>
        <label>CWF19L2</label>
    </interactant>
    <organismsDiffer>false</organismsDiffer>
    <experiments>3</experiments>
</comment>
<comment type="interaction">
    <interactant intactId="EBI-4400025">
        <id>Q9Y2T1</id>
    </interactant>
    <interactant intactId="EBI-742350">
        <id>Q14241</id>
        <label>ELOA</label>
    </interactant>
    <organismsDiffer>false</organismsDiffer>
    <experiments>3</experiments>
</comment>
<comment type="interaction">
    <interactant intactId="EBI-4400025">
        <id>Q9Y2T1</id>
    </interactant>
    <interactant intactId="EBI-719941">
        <id>Q3B820</id>
        <label>FAM161A</label>
    </interactant>
    <organismsDiffer>false</organismsDiffer>
    <experiments>3</experiments>
</comment>
<comment type="interaction">
    <interactant intactId="EBI-4400025">
        <id>Q9Y2T1</id>
    </interactant>
    <interactant intactId="EBI-1044067">
        <id>P49840</id>
        <label>GSK3A</label>
    </interactant>
    <organismsDiffer>false</organismsDiffer>
    <experiments>4</experiments>
</comment>
<comment type="interaction">
    <interactant intactId="EBI-4400025">
        <id>Q9Y2T1</id>
    </interactant>
    <interactant intactId="EBI-373586">
        <id>P49841</id>
        <label>GSK3B</label>
    </interactant>
    <organismsDiffer>false</organismsDiffer>
    <experiments>6</experiments>
</comment>
<comment type="interaction">
    <interactant intactId="EBI-4400025">
        <id>Q9Y2T1</id>
    </interactant>
    <interactant intactId="EBI-3893317">
        <id>P09067</id>
        <label>HOXB5</label>
    </interactant>
    <organismsDiffer>false</organismsDiffer>
    <experiments>3</experiments>
</comment>
<comment type="interaction">
    <interactant intactId="EBI-4400025">
        <id>Q9Y2T1</id>
    </interactant>
    <interactant intactId="EBI-14069005">
        <id>Q9BVG8-5</id>
        <label>KIFC3</label>
    </interactant>
    <organismsDiffer>false</organismsDiffer>
    <experiments>3</experiments>
</comment>
<comment type="interaction">
    <interactant intactId="EBI-4400025">
        <id>Q9Y2T1</id>
    </interactant>
    <interactant intactId="EBI-11955579">
        <id>P60014</id>
        <label>KRTAP10-10</label>
    </interactant>
    <organismsDiffer>false</organismsDiffer>
    <experiments>3</experiments>
</comment>
<comment type="interaction">
    <interactant intactId="EBI-4400025">
        <id>Q9Y2T1</id>
    </interactant>
    <interactant intactId="EBI-10171774">
        <id>P60410</id>
        <label>KRTAP10-8</label>
    </interactant>
    <organismsDiffer>false</organismsDiffer>
    <experiments>3</experiments>
</comment>
<comment type="interaction">
    <interactant intactId="EBI-4400025">
        <id>Q9Y2T1</id>
    </interactant>
    <interactant intactId="EBI-11993254">
        <id>Q9BYR2</id>
        <label>KRTAP4-5</label>
    </interactant>
    <organismsDiffer>false</organismsDiffer>
    <experiments>3</experiments>
</comment>
<comment type="interaction">
    <interactant intactId="EBI-4400025">
        <id>Q9Y2T1</id>
    </interactant>
    <interactant intactId="EBI-1044640">
        <id>Q9BYQ4</id>
        <label>KRTAP9-2</label>
    </interactant>
    <organismsDiffer>false</organismsDiffer>
    <experiments>3</experiments>
</comment>
<comment type="interaction">
    <interactant intactId="EBI-4400025">
        <id>Q9Y2T1</id>
    </interactant>
    <interactant intactId="EBI-739832">
        <id>Q8TBB1</id>
        <label>LNX1</label>
    </interactant>
    <organismsDiffer>false</organismsDiffer>
    <experiments>3</experiments>
</comment>
<comment type="interaction">
    <interactant intactId="EBI-4400025">
        <id>Q9Y2T1</id>
    </interactant>
    <interactant intactId="EBI-348259">
        <id>Q96EZ8</id>
        <label>MCRS1</label>
    </interactant>
    <organismsDiffer>false</organismsDiffer>
    <experiments>3</experiments>
</comment>
<comment type="interaction">
    <interactant intactId="EBI-4400025">
        <id>Q9Y2T1</id>
    </interactant>
    <interactant intactId="EBI-476768">
        <id>P53350</id>
        <label>PLK1</label>
    </interactant>
    <organismsDiffer>false</organismsDiffer>
    <experiments>2</experiments>
</comment>
<comment type="interaction">
    <interactant intactId="EBI-4400025">
        <id>Q9Y2T1</id>
    </interactant>
    <interactant intactId="EBI-1044367">
        <id>P62714</id>
        <label>PPP2CB</label>
    </interactant>
    <organismsDiffer>false</organismsDiffer>
    <experiments>4</experiments>
</comment>
<comment type="interaction">
    <interactant intactId="EBI-4400025">
        <id>Q9Y2T1</id>
    </interactant>
    <interactant intactId="EBI-641666">
        <id>Q15172</id>
        <label>PPP2R5A</label>
    </interactant>
    <organismsDiffer>false</organismsDiffer>
    <experiments>3</experiments>
</comment>
<comment type="interaction">
    <interactant intactId="EBI-4400025">
        <id>Q9Y2T1</id>
    </interactant>
    <interactant intactId="EBI-359335">
        <id>P49721</id>
        <label>PSMB2</label>
    </interactant>
    <organismsDiffer>false</organismsDiffer>
    <experiments>3</experiments>
</comment>
<comment type="interaction">
    <interactant intactId="EBI-4400025">
        <id>Q9Y2T1</id>
    </interactant>
    <interactant intactId="EBI-748391">
        <id>Q9BWG6</id>
        <label>SCNM1</label>
    </interactant>
    <organismsDiffer>false</organismsDiffer>
    <experiments>3</experiments>
</comment>
<comment type="interaction">
    <interactant intactId="EBI-4400025">
        <id>Q9Y2T1</id>
    </interactant>
    <interactant intactId="EBI-714135">
        <id>O75558</id>
        <label>STX11</label>
    </interactant>
    <organismsDiffer>false</organismsDiffer>
    <experiments>3</experiments>
</comment>
<comment type="interaction">
    <interactant intactId="EBI-4400025">
        <id>Q9Y2T1</id>
    </interactant>
    <interactant intactId="EBI-710310">
        <id>Q15560</id>
        <label>TCEA2</label>
    </interactant>
    <organismsDiffer>false</organismsDiffer>
    <experiments>3</experiments>
</comment>
<comment type="interaction">
    <interactant intactId="EBI-4400025">
        <id>Q9Y2T1</id>
    </interactant>
    <interactant intactId="EBI-11955057">
        <id>Q8N8B7-2</id>
        <label>TCEANC</label>
    </interactant>
    <organismsDiffer>false</organismsDiffer>
    <experiments>3</experiments>
</comment>
<comment type="interaction">
    <interactant intactId="EBI-4400025">
        <id>Q9Y2T1</id>
    </interactant>
    <interactant intactId="EBI-714215">
        <id>Q15583</id>
        <label>TGIF1</label>
    </interactant>
    <organismsDiffer>false</organismsDiffer>
    <experiments>5</experiments>
</comment>
<comment type="interaction">
    <interactant intactId="EBI-4400025">
        <id>Q9Y2T1</id>
    </interactant>
    <interactant intactId="EBI-373403">
        <id>O95985</id>
        <label>TOP3B</label>
    </interactant>
    <organismsDiffer>false</organismsDiffer>
    <experiments>3</experiments>
</comment>
<comment type="interaction">
    <interactant intactId="EBI-4400025">
        <id>Q9Y2T1</id>
    </interactant>
    <interactant intactId="EBI-744794">
        <id>Q9BZW7</id>
        <label>TSGA10</label>
    </interactant>
    <organismsDiffer>false</organismsDiffer>
    <experiments>3</experiments>
</comment>
<comment type="interaction">
    <interactant intactId="EBI-4400025">
        <id>Q9Y2T1</id>
    </interactant>
    <interactant intactId="EBI-359793">
        <id>P40222</id>
        <label>TXLNA</label>
    </interactant>
    <organismsDiffer>false</organismsDiffer>
    <experiments>3</experiments>
</comment>
<comment type="interaction">
    <interactant intactId="EBI-4400025">
        <id>Q9Y2T1</id>
    </interactant>
    <interactant intactId="EBI-6116822">
        <id>Q8N3L3</id>
        <label>TXLNB</label>
    </interactant>
    <organismsDiffer>false</organismsDiffer>
    <experiments>3</experiments>
</comment>
<comment type="interaction">
    <interactant intactId="EBI-4400025">
        <id>Q9Y2T1</id>
    </interactant>
    <interactant intactId="EBI-2555767">
        <id>Q15973</id>
        <label>ZNF124</label>
    </interactant>
    <organismsDiffer>false</organismsDiffer>
    <experiments>3</experiments>
</comment>
<comment type="interaction">
    <interactant intactId="EBI-4400025">
        <id>Q9Y2T1</id>
    </interactant>
    <interactant intactId="EBI-740727">
        <id>Q8TAU3</id>
        <label>ZNF417</label>
    </interactant>
    <organismsDiffer>false</organismsDiffer>
    <experiments>3</experiments>
</comment>
<comment type="interaction">
    <interactant intactId="EBI-4400025">
        <id>Q9Y2T1</id>
    </interactant>
    <interactant intactId="EBI-6427977">
        <id>Q96SQ5</id>
        <label>ZNF587</label>
    </interactant>
    <organismsDiffer>false</organismsDiffer>
    <experiments>3</experiments>
</comment>
<comment type="interaction">
    <interactant intactId="EBI-4400025">
        <id>Q9Y2T1</id>
    </interactant>
    <interactant intactId="EBI-11985915">
        <id>Q5T619</id>
        <label>ZNF648</label>
    </interactant>
    <organismsDiffer>false</organismsDiffer>
    <experiments>3</experiments>
</comment>
<comment type="subcellular location">
    <subcellularLocation>
        <location evidence="14">Cytoplasm</location>
    </subcellularLocation>
</comment>
<comment type="tissue specificity">
    <text>Expressed in brain and lymphoblast.</text>
</comment>
<comment type="domain">
    <text evidence="1">The tankyrase-binding motif (also named TBD) is required for interaction with tankyrase TNKS and TNKS2.</text>
</comment>
<comment type="PTM">
    <text evidence="2">Probably phosphorylated by GSK3B and dephosphorylated by PP2A.</text>
</comment>
<comment type="PTM">
    <text evidence="14">ADP-ribosylated by tankyrase TNKS and TNKS2. Poly-ADP-ribosylated protein is recognized by RNF146, followed by ubiquitination and subsequent activation of the Wnt signaling pathway.</text>
</comment>
<comment type="PTM">
    <text evidence="14">Ubiquitinated by RNF146 when poly-ADP-ribosylated, leading to its degradation and subsequent activation of the Wnt signaling pathway. Deubiquitinated by USP34, deubiquitinated downstream of beta-catenin stabilization step: deubiquitination is important Wnt signaling to positively regulate beta-catenin (CTNBB1)-mediated transcription.</text>
</comment>
<comment type="disease" evidence="8">
    <disease id="DI-01359">
        <name>Colorectal cancer</name>
        <acronym>CRC</acronym>
        <description>A complex disease characterized by malignant lesions arising from the inner wall of the large intestine (the colon) and the rectum. Genetic alterations are often associated with progression from premalignant lesion (adenoma) to invasive adenocarcinoma. Risk factors for cancer of the colon and rectum include colon polyps, long-standing ulcerative colitis, and genetic family history.</description>
        <dbReference type="MIM" id="114500"/>
    </disease>
    <text>The gene represented in this entry is involved in disease pathogenesis.</text>
</comment>
<comment type="disease" evidence="9">
    <disease id="DI-02092">
        <name>Oligodontia-colorectal cancer syndrome</name>
        <acronym>ODCRCS</acronym>
        <description>Affected individuals manifest severe tooth agenesis and colorectal cancer or precancerous lesions of variable types.</description>
        <dbReference type="MIM" id="608615"/>
    </disease>
    <text>The disease is caused by variants affecting the gene represented in this entry.</text>
</comment>
<comment type="online information" name="Atlas of Genetics and Cytogenetics in Oncology and Haematology">
    <link uri="https://atlasgeneticsoncology.org/gene/456/AXIN2"/>
</comment>
<reference key="1">
    <citation type="journal article" date="1999" name="Genomics">
        <title>Cloning of the human homolog of conductin (AXIN2), a gene mapping to chromosome 17q23-q24.</title>
        <authorList>
            <person name="Mai M."/>
            <person name="Qian C."/>
            <person name="Yokomizo A."/>
            <person name="Smith D.I."/>
            <person name="Liu W."/>
        </authorList>
    </citation>
    <scope>NUCLEOTIDE SEQUENCE [MRNA]</scope>
    <scope>VARIANT SER-50</scope>
</reference>
<reference key="2">
    <citation type="submission" date="1999-11" db="EMBL/GenBank/DDBJ databases">
        <title>Properties of mouse Axin2 and human AXIN2: chromosomal location, expression pattern, interaction with Axin and effects on embryonic axis formation.</title>
        <authorList>
            <person name="Zhang T."/>
            <person name="Fagotto F."/>
            <person name="Hsu W."/>
            <person name="Zeng L."/>
            <person name="Gilbert D."/>
            <person name="Copeland N.G."/>
            <person name="Jenkins N.A."/>
            <person name="Warburton D."/>
            <person name="Costantini F."/>
        </authorList>
    </citation>
    <scope>NUCLEOTIDE SEQUENCE [MRNA]</scope>
    <source>
        <tissue>Brain</tissue>
        <tissue>Lymphoblast</tissue>
    </source>
</reference>
<reference key="3">
    <citation type="journal article" date="2006" name="Nature">
        <title>DNA sequence of human chromosome 17 and analysis of rearrangement in the human lineage.</title>
        <authorList>
            <person name="Zody M.C."/>
            <person name="Garber M."/>
            <person name="Adams D.J."/>
            <person name="Sharpe T."/>
            <person name="Harrow J."/>
            <person name="Lupski J.R."/>
            <person name="Nicholson C."/>
            <person name="Searle S.M."/>
            <person name="Wilming L."/>
            <person name="Young S.K."/>
            <person name="Abouelleil A."/>
            <person name="Allen N.R."/>
            <person name="Bi W."/>
            <person name="Bloom T."/>
            <person name="Borowsky M.L."/>
            <person name="Bugalter B.E."/>
            <person name="Butler J."/>
            <person name="Chang J.L."/>
            <person name="Chen C.-K."/>
            <person name="Cook A."/>
            <person name="Corum B."/>
            <person name="Cuomo C.A."/>
            <person name="de Jong P.J."/>
            <person name="DeCaprio D."/>
            <person name="Dewar K."/>
            <person name="FitzGerald M."/>
            <person name="Gilbert J."/>
            <person name="Gibson R."/>
            <person name="Gnerre S."/>
            <person name="Goldstein S."/>
            <person name="Grafham D.V."/>
            <person name="Grocock R."/>
            <person name="Hafez N."/>
            <person name="Hagopian D.S."/>
            <person name="Hart E."/>
            <person name="Norman C.H."/>
            <person name="Humphray S."/>
            <person name="Jaffe D.B."/>
            <person name="Jones M."/>
            <person name="Kamal M."/>
            <person name="Khodiyar V.K."/>
            <person name="LaButti K."/>
            <person name="Laird G."/>
            <person name="Lehoczky J."/>
            <person name="Liu X."/>
            <person name="Lokyitsang T."/>
            <person name="Loveland J."/>
            <person name="Lui A."/>
            <person name="Macdonald P."/>
            <person name="Major J.E."/>
            <person name="Matthews L."/>
            <person name="Mauceli E."/>
            <person name="McCarroll S.A."/>
            <person name="Mihalev A.H."/>
            <person name="Mudge J."/>
            <person name="Nguyen C."/>
            <person name="Nicol R."/>
            <person name="O'Leary S.B."/>
            <person name="Osoegawa K."/>
            <person name="Schwartz D.C."/>
            <person name="Shaw-Smith C."/>
            <person name="Stankiewicz P."/>
            <person name="Steward C."/>
            <person name="Swarbreck D."/>
            <person name="Venkataraman V."/>
            <person name="Whittaker C.A."/>
            <person name="Yang X."/>
            <person name="Zimmer A.R."/>
            <person name="Bradley A."/>
            <person name="Hubbard T."/>
            <person name="Birren B.W."/>
            <person name="Rogers J."/>
            <person name="Lander E.S."/>
            <person name="Nusbaum C."/>
        </authorList>
    </citation>
    <scope>NUCLEOTIDE SEQUENCE [LARGE SCALE GENOMIC DNA]</scope>
</reference>
<reference key="4">
    <citation type="journal article" date="2004" name="Genome Res.">
        <title>The status, quality, and expansion of the NIH full-length cDNA project: the Mammalian Gene Collection (MGC).</title>
        <authorList>
            <consortium name="The MGC Project Team"/>
        </authorList>
    </citation>
    <scope>NUCLEOTIDE SEQUENCE [LARGE SCALE MRNA]</scope>
    <scope>VARIANT SER-50</scope>
    <source>
        <tissue>Brain</tissue>
    </source>
</reference>
<reference key="5">
    <citation type="submission" date="2000-12" db="EMBL/GenBank/DDBJ databases">
        <title>Identification of 3' UTR of Axin2.</title>
        <authorList>
            <person name="Takahashi M."/>
            <person name="Furukawa Y."/>
        </authorList>
    </citation>
    <scope>NUCLEOTIDE SEQUENCE [MRNA] OF 697-843</scope>
</reference>
<reference key="6">
    <citation type="journal article" date="2000" name="Nat. Genet.">
        <title>Mutations in AXIN2 cause colorectal cancer with defective mismatch repair by activating beta-catenin/TCF signalling.</title>
        <authorList>
            <person name="Liu W."/>
            <person name="Dong X."/>
            <person name="Mai M."/>
            <person name="Seelan R.S."/>
            <person name="Taniguchi K."/>
            <person name="Krishnadath K.K."/>
            <person name="Halling K.C."/>
            <person name="Cunningham J.M."/>
            <person name="Qian C."/>
            <person name="Christensen E."/>
            <person name="Roches P.C."/>
            <person name="Smith D.I."/>
            <person name="Thibodeau S.N."/>
        </authorList>
    </citation>
    <scope>INVOLVEMENT IN COLORECTAL CANCER</scope>
</reference>
<reference key="7">
    <citation type="journal article" date="2004" name="Am. J. Hum. Genet.">
        <title>Mutations in AXIN2 cause familial tooth agenesis and predispose to colorectal cancer.</title>
        <authorList>
            <person name="Lammi L."/>
            <person name="Arte S."/>
            <person name="Somer M."/>
            <person name="Jarvinen H."/>
            <person name="Lahermo P."/>
            <person name="Thesleff I."/>
            <person name="Pirinen S."/>
            <person name="Nieminen P."/>
        </authorList>
    </citation>
    <scope>INVOLVEMENT IN ODCRCS</scope>
</reference>
<reference key="8">
    <citation type="journal article" date="2006" name="EMBO J.">
        <title>Axin is a scaffold protein in TGF-beta signaling that promotes degradation of Smad7 by Arkadia.</title>
        <authorList>
            <person name="Liu W."/>
            <person name="Rui H."/>
            <person name="Wang J."/>
            <person name="Lin S."/>
            <person name="He Y."/>
            <person name="Chen M."/>
            <person name="Li Q."/>
            <person name="Ye Z."/>
            <person name="Zhang S."/>
            <person name="Chan S.C."/>
            <person name="Chen Y.-G."/>
            <person name="Han J."/>
            <person name="Lin S.-C."/>
        </authorList>
    </citation>
    <scope>INTERACTION WITH SMAD7 AND RNF111</scope>
</reference>
<reference key="9">
    <citation type="journal article" date="2009" name="Nature">
        <title>Tankyrase inhibition stabilizes axin and antagonizes Wnt signalling.</title>
        <authorList>
            <person name="Huang S.M."/>
            <person name="Mishina Y.M."/>
            <person name="Liu S."/>
            <person name="Cheung A."/>
            <person name="Stegmeier F."/>
            <person name="Michaud G.A."/>
            <person name="Charlat O."/>
            <person name="Wiellette E."/>
            <person name="Zhang Y."/>
            <person name="Wiessner S."/>
            <person name="Hild M."/>
            <person name="Shi X."/>
            <person name="Wilson C.J."/>
            <person name="Mickanin C."/>
            <person name="Myer V."/>
            <person name="Fazal A."/>
            <person name="Tomlinson R."/>
            <person name="Serluca F."/>
            <person name="Shao W."/>
            <person name="Cheng H."/>
            <person name="Shultz M."/>
            <person name="Rau C."/>
            <person name="Schirle M."/>
            <person name="Schlegl J."/>
            <person name="Ghidelli S."/>
            <person name="Fawell S."/>
            <person name="Lu C."/>
            <person name="Curtis D."/>
            <person name="Kirschner M.W."/>
            <person name="Lengauer C."/>
            <person name="Finan P.M."/>
            <person name="Tallarico J.A."/>
            <person name="Bouwmeester T."/>
            <person name="Porter J.A."/>
            <person name="Bauer A."/>
            <person name="Cong F."/>
        </authorList>
    </citation>
    <scope>ADP-RIBOSYLATION</scope>
    <scope>UBIQUITINATION</scope>
    <scope>INTERACTION WITH TNKS AND TNKS2</scope>
</reference>
<reference key="10">
    <citation type="journal article" date="2011" name="Mol. Cell. Biol.">
        <title>The Ubiquitin specific protease USP34 regulates Axin stability and Wnt/beta-catenin signaling.</title>
        <authorList>
            <person name="Lui T.T."/>
            <person name="Lacroix C."/>
            <person name="Ahmed S.M."/>
            <person name="Goldenberg S.J."/>
            <person name="Leach C.A."/>
            <person name="Daulat A.M."/>
            <person name="Angers S."/>
        </authorList>
    </citation>
    <scope>UBIQUITINATION</scope>
    <scope>DEUBIQUITINATION BY USP34</scope>
</reference>
<reference key="11">
    <citation type="journal article" date="2011" name="Nat. Cell Biol.">
        <title>RNF146 is a poly(ADP-ribose)-directed E3 ligase that regulates axin degradation and Wnt signalling.</title>
        <authorList>
            <person name="Zhang Y."/>
            <person name="Liu S."/>
            <person name="Mickanin C."/>
            <person name="Feng Y."/>
            <person name="Charlat O."/>
            <person name="Michaud G.A."/>
            <person name="Schirle M."/>
            <person name="Shi X."/>
            <person name="Hild M."/>
            <person name="Bauer A."/>
            <person name="Myer V.E."/>
            <person name="Finan P.M."/>
            <person name="Porter J.A."/>
            <person name="Huang S.M."/>
            <person name="Cong F."/>
        </authorList>
    </citation>
    <scope>ADP-RIBOSYLATION</scope>
    <scope>UBIQUITINATION</scope>
    <scope>INTERACTION WITH RNF146; TNKS AND TNKS2</scope>
</reference>
<reference key="12">
    <citation type="journal article" date="2017" name="Genes Dev.">
        <title>The SIAH E3 ubiquitin ligases promote Wnt/beta-catenin signaling through mediating Wnt-induced Axin degradation.</title>
        <authorList>
            <person name="Ji L."/>
            <person name="Jiang B."/>
            <person name="Jiang X."/>
            <person name="Charlat O."/>
            <person name="Chen A."/>
            <person name="Mickanin C."/>
            <person name="Bauer A."/>
            <person name="Xu W."/>
            <person name="Yan X."/>
            <person name="Cong F."/>
        </authorList>
    </citation>
    <scope>INTERACTION WITH SIAH1 AND SIAH2</scope>
</reference>
<reference key="13">
    <citation type="journal article" date="2006" name="Int. J. Mol. Med.">
        <title>Single nucleotide polymorphism of the AXIN2 gene is preferentially associated with human lung cancer risk in a Japanese population.</title>
        <authorList>
            <person name="Kanzaki H."/>
            <person name="Ouchida M."/>
            <person name="Hanafusa H."/>
            <person name="Yano M."/>
            <person name="Suzuki H."/>
            <person name="Aoe M."/>
            <person name="Imai K."/>
            <person name="Shimizu N."/>
            <person name="Nakachi K."/>
            <person name="Shimizu K."/>
        </authorList>
    </citation>
    <scope>VARIANT SER-50</scope>
</reference>
<proteinExistence type="evidence at protein level"/>
<feature type="chain" id="PRO_0000220895" description="Axin-2">
    <location>
        <begin position="1"/>
        <end position="843"/>
    </location>
</feature>
<feature type="domain" description="RGS" evidence="5">
    <location>
        <begin position="81"/>
        <end position="200"/>
    </location>
</feature>
<feature type="domain" description="DIX" evidence="4">
    <location>
        <begin position="761"/>
        <end position="843"/>
    </location>
</feature>
<feature type="region of interest" description="Disordered" evidence="6">
    <location>
        <begin position="1"/>
        <end position="75"/>
    </location>
</feature>
<feature type="region of interest" description="Interaction with GSK3B" evidence="1">
    <location>
        <begin position="327"/>
        <end position="413"/>
    </location>
</feature>
<feature type="region of interest" description="Interaction with SIAH1 and SIAH2" evidence="16">
    <location>
        <begin position="334"/>
        <end position="393"/>
    </location>
</feature>
<feature type="region of interest" description="Disordered" evidence="6">
    <location>
        <begin position="396"/>
        <end position="435"/>
    </location>
</feature>
<feature type="region of interest" description="Interaction with beta-catenin" evidence="1">
    <location>
        <begin position="413"/>
        <end position="476"/>
    </location>
</feature>
<feature type="region of interest" description="Disordered" evidence="6">
    <location>
        <begin position="447"/>
        <end position="494"/>
    </location>
</feature>
<feature type="region of interest" description="Disordered" evidence="6">
    <location>
        <begin position="561"/>
        <end position="674"/>
    </location>
</feature>
<feature type="region of interest" description="Disordered" evidence="6">
    <location>
        <begin position="718"/>
        <end position="748"/>
    </location>
</feature>
<feature type="short sequence motif" description="Tankyrase-binding motif">
    <location>
        <begin position="21"/>
        <end position="30"/>
    </location>
</feature>
<feature type="compositionally biased region" description="Basic and acidic residues" evidence="6">
    <location>
        <begin position="56"/>
        <end position="69"/>
    </location>
</feature>
<feature type="compositionally biased region" description="Low complexity" evidence="6">
    <location>
        <begin position="477"/>
        <end position="494"/>
    </location>
</feature>
<feature type="compositionally biased region" description="Low complexity" evidence="6">
    <location>
        <begin position="588"/>
        <end position="597"/>
    </location>
</feature>
<feature type="compositionally biased region" description="Polar residues" evidence="6">
    <location>
        <begin position="727"/>
        <end position="741"/>
    </location>
</feature>
<feature type="sequence variant" id="VAR_054860" description="In dbSNP:rs2240308." evidence="7 10 12">
    <original>P</original>
    <variation>S</variation>
    <location>
        <position position="50"/>
    </location>
</feature>
<feature type="sequence conflict" description="In Ref. 2; AAF22799." evidence="17" ref="2">
    <original>QPGVGKGQVTKPMPVSSNTRRNEDGL</original>
    <variation>HHGGQGPGHQTHVCLFQHQAERRWV</variation>
    <location>
        <begin position="37"/>
        <end position="62"/>
    </location>
</feature>
<feature type="sequence conflict" description="In Ref. 2; AAF22799." evidence="17" ref="2">
    <original>Q</original>
    <variation>R</variation>
    <location>
        <position position="346"/>
    </location>
</feature>
<feature type="sequence conflict" description="In Ref. 2; AAF22799." evidence="17" ref="2">
    <location>
        <begin position="572"/>
        <end position="636"/>
    </location>
</feature>
<feature type="sequence conflict" description="In Ref. 2; AAF22799." evidence="17" ref="2">
    <original>P</original>
    <variation>S</variation>
    <location>
        <position position="687"/>
    </location>
</feature>
<feature type="sequence conflict" description="In Ref. 2; AAF22799." evidence="17" ref="2">
    <original>Q</original>
    <variation>H</variation>
    <location>
        <position position="696"/>
    </location>
</feature>
<name>AXIN2_HUMAN</name>
<organism>
    <name type="scientific">Homo sapiens</name>
    <name type="common">Human</name>
    <dbReference type="NCBI Taxonomy" id="9606"/>
    <lineage>
        <taxon>Eukaryota</taxon>
        <taxon>Metazoa</taxon>
        <taxon>Chordata</taxon>
        <taxon>Craniata</taxon>
        <taxon>Vertebrata</taxon>
        <taxon>Euteleostomi</taxon>
        <taxon>Mammalia</taxon>
        <taxon>Eutheria</taxon>
        <taxon>Euarchontoglires</taxon>
        <taxon>Primates</taxon>
        <taxon>Haplorrhini</taxon>
        <taxon>Catarrhini</taxon>
        <taxon>Hominidae</taxon>
        <taxon>Homo</taxon>
    </lineage>
</organism>